<accession>B0BTB3</accession>
<sequence length="128" mass="14434">MIKGVQITESSNSNLVNSFWLLDEEKNEARCIAAKGDVYKEDQVIAISELGQIAYREVPVNVAPTIKVEGGQHLNVNVLRRETLEDAVKNPEKYPQLTIRVSGYAVRFNSLTPEQQRDVITRTFTESL</sequence>
<keyword id="KW-0556">Organic radical</keyword>
<dbReference type="EMBL" id="CP000687">
    <property type="protein sequence ID" value="ABY68970.1"/>
    <property type="molecule type" value="Genomic_DNA"/>
</dbReference>
<dbReference type="RefSeq" id="WP_005596358.1">
    <property type="nucleotide sequence ID" value="NC_010278.1"/>
</dbReference>
<dbReference type="SMR" id="B0BTB3"/>
<dbReference type="GeneID" id="48598527"/>
<dbReference type="KEGG" id="apj:APJL_0379"/>
<dbReference type="HOGENOM" id="CLU_133780_0_0_6"/>
<dbReference type="Proteomes" id="UP000008547">
    <property type="component" value="Chromosome"/>
</dbReference>
<dbReference type="GO" id="GO:0005829">
    <property type="term" value="C:cytosol"/>
    <property type="evidence" value="ECO:0007669"/>
    <property type="project" value="TreeGrafter"/>
</dbReference>
<dbReference type="GO" id="GO:0008861">
    <property type="term" value="F:formate C-acetyltransferase activity"/>
    <property type="evidence" value="ECO:0007669"/>
    <property type="project" value="TreeGrafter"/>
</dbReference>
<dbReference type="FunFam" id="3.20.70.20:FF:000002">
    <property type="entry name" value="Autonomous glycyl radical cofactor"/>
    <property type="match status" value="1"/>
</dbReference>
<dbReference type="Gene3D" id="3.20.70.20">
    <property type="match status" value="1"/>
</dbReference>
<dbReference type="HAMAP" id="MF_00806">
    <property type="entry name" value="GrcA"/>
    <property type="match status" value="1"/>
</dbReference>
<dbReference type="InterPro" id="IPR050244">
    <property type="entry name" value="Auton_GlycylRad_Cofactor"/>
</dbReference>
<dbReference type="InterPro" id="IPR019777">
    <property type="entry name" value="Form_AcTrfase_GR_CS"/>
</dbReference>
<dbReference type="InterPro" id="IPR001150">
    <property type="entry name" value="Gly_radical"/>
</dbReference>
<dbReference type="InterPro" id="IPR011140">
    <property type="entry name" value="Glycyl_radical_cofactor_GrcA"/>
</dbReference>
<dbReference type="NCBIfam" id="TIGR04365">
    <property type="entry name" value="spare_glycyl"/>
    <property type="match status" value="1"/>
</dbReference>
<dbReference type="PANTHER" id="PTHR30191">
    <property type="entry name" value="FORMATE ACETYLTRANSFERASE"/>
    <property type="match status" value="1"/>
</dbReference>
<dbReference type="PANTHER" id="PTHR30191:SF0">
    <property type="entry name" value="FORMATE ACETYLTRANSFERASE 1"/>
    <property type="match status" value="1"/>
</dbReference>
<dbReference type="Pfam" id="PF01228">
    <property type="entry name" value="Gly_radical"/>
    <property type="match status" value="1"/>
</dbReference>
<dbReference type="PIRSF" id="PIRSF000378">
    <property type="entry name" value="Gly_radicl_yfiD"/>
    <property type="match status" value="1"/>
</dbReference>
<dbReference type="SUPFAM" id="SSF51998">
    <property type="entry name" value="PFL-like glycyl radical enzymes"/>
    <property type="match status" value="1"/>
</dbReference>
<dbReference type="PROSITE" id="PS00850">
    <property type="entry name" value="GLY_RADICAL_1"/>
    <property type="match status" value="1"/>
</dbReference>
<dbReference type="PROSITE" id="PS51149">
    <property type="entry name" value="GLY_RADICAL_2"/>
    <property type="match status" value="1"/>
</dbReference>
<protein>
    <recommendedName>
        <fullName evidence="1">Autonomous glycyl radical cofactor</fullName>
    </recommendedName>
</protein>
<reference key="1">
    <citation type="journal article" date="2008" name="PLoS ONE">
        <title>Genome biology of Actinobacillus pleuropneumoniae JL03, an isolate of serotype 3 prevalent in China.</title>
        <authorList>
            <person name="Xu Z."/>
            <person name="Zhou Y."/>
            <person name="Li L."/>
            <person name="Zhou R."/>
            <person name="Xiao S."/>
            <person name="Wan Y."/>
            <person name="Zhang S."/>
            <person name="Wang K."/>
            <person name="Li W."/>
            <person name="Li L."/>
            <person name="Jin H."/>
            <person name="Kang M."/>
            <person name="Dalai B."/>
            <person name="Li T."/>
            <person name="Liu L."/>
            <person name="Cheng Y."/>
            <person name="Zhang L."/>
            <person name="Xu T."/>
            <person name="Zheng H."/>
            <person name="Pu S."/>
            <person name="Wang B."/>
            <person name="Gu W."/>
            <person name="Zhang X.L."/>
            <person name="Zhu G.-F."/>
            <person name="Wang S."/>
            <person name="Zhao G.-P."/>
            <person name="Chen H."/>
        </authorList>
    </citation>
    <scope>NUCLEOTIDE SEQUENCE [LARGE SCALE GENOMIC DNA]</scope>
    <source>
        <strain>JL03</strain>
    </source>
</reference>
<organism>
    <name type="scientific">Actinobacillus pleuropneumoniae serotype 3 (strain JL03)</name>
    <dbReference type="NCBI Taxonomy" id="434271"/>
    <lineage>
        <taxon>Bacteria</taxon>
        <taxon>Pseudomonadati</taxon>
        <taxon>Pseudomonadota</taxon>
        <taxon>Gammaproteobacteria</taxon>
        <taxon>Pasteurellales</taxon>
        <taxon>Pasteurellaceae</taxon>
        <taxon>Actinobacillus</taxon>
    </lineage>
</organism>
<evidence type="ECO:0000255" key="1">
    <source>
        <dbReference type="HAMAP-Rule" id="MF_00806"/>
    </source>
</evidence>
<proteinExistence type="inferred from homology"/>
<feature type="chain" id="PRO_1000133979" description="Autonomous glycyl radical cofactor">
    <location>
        <begin position="1"/>
        <end position="128"/>
    </location>
</feature>
<feature type="domain" description="Glycine radical" evidence="1">
    <location>
        <begin position="5"/>
        <end position="128"/>
    </location>
</feature>
<feature type="modified residue" description="Glycine radical" evidence="1">
    <location>
        <position position="103"/>
    </location>
</feature>
<comment type="function">
    <text evidence="1">Acts as a radical domain for damaged PFL and possibly other radical proteins.</text>
</comment>
<gene>
    <name evidence="1" type="primary">grcA</name>
    <name type="ordered locus">APJL_0379</name>
</gene>
<name>GRCA_ACTPJ</name>